<dbReference type="EC" id="4.1.2.40" evidence="1"/>
<dbReference type="EMBL" id="CU928164">
    <property type="protein sequence ID" value="CAR19754.1"/>
    <property type="molecule type" value="Genomic_DNA"/>
</dbReference>
<dbReference type="RefSeq" id="WP_000022772.1">
    <property type="nucleotide sequence ID" value="NC_011750.1"/>
</dbReference>
<dbReference type="RefSeq" id="YP_002409541.1">
    <property type="nucleotide sequence ID" value="NC_011750.1"/>
</dbReference>
<dbReference type="SMR" id="B7NKL0"/>
<dbReference type="STRING" id="585057.ECIAI39_3638"/>
<dbReference type="KEGG" id="ect:ECIAI39_3638"/>
<dbReference type="PATRIC" id="fig|585057.6.peg.3771"/>
<dbReference type="HOGENOM" id="CLU_040088_0_1_6"/>
<dbReference type="UniPathway" id="UPA00704">
    <property type="reaction ID" value="UER00716"/>
</dbReference>
<dbReference type="Proteomes" id="UP000000749">
    <property type="component" value="Chromosome"/>
</dbReference>
<dbReference type="GO" id="GO:0005829">
    <property type="term" value="C:cytosol"/>
    <property type="evidence" value="ECO:0007669"/>
    <property type="project" value="TreeGrafter"/>
</dbReference>
<dbReference type="GO" id="GO:0009025">
    <property type="term" value="F:tagatose-bisphosphate aldolase activity"/>
    <property type="evidence" value="ECO:0007669"/>
    <property type="project" value="UniProtKB-UniRule"/>
</dbReference>
<dbReference type="GO" id="GO:0008270">
    <property type="term" value="F:zinc ion binding"/>
    <property type="evidence" value="ECO:0007669"/>
    <property type="project" value="UniProtKB-UniRule"/>
</dbReference>
<dbReference type="GO" id="GO:0005975">
    <property type="term" value="P:carbohydrate metabolic process"/>
    <property type="evidence" value="ECO:0007669"/>
    <property type="project" value="InterPro"/>
</dbReference>
<dbReference type="GO" id="GO:2001059">
    <property type="term" value="P:D-tagatose 6-phosphate catabolic process"/>
    <property type="evidence" value="ECO:0007669"/>
    <property type="project" value="UniProtKB-UniRule"/>
</dbReference>
<dbReference type="FunFam" id="3.20.20.70:FF:000043">
    <property type="entry name" value="D-tagatose-1,6-bisphosphate aldolase subunit GatY"/>
    <property type="match status" value="1"/>
</dbReference>
<dbReference type="Gene3D" id="3.20.20.70">
    <property type="entry name" value="Aldolase class I"/>
    <property type="match status" value="1"/>
</dbReference>
<dbReference type="HAMAP" id="MF_01293">
    <property type="entry name" value="TagBP_aldolase_KbaY"/>
    <property type="match status" value="1"/>
</dbReference>
<dbReference type="InterPro" id="IPR013785">
    <property type="entry name" value="Aldolase_TIM"/>
</dbReference>
<dbReference type="InterPro" id="IPR050246">
    <property type="entry name" value="Class_II_FBP_aldolase"/>
</dbReference>
<dbReference type="InterPro" id="IPR000771">
    <property type="entry name" value="FBA_II"/>
</dbReference>
<dbReference type="InterPro" id="IPR023788">
    <property type="entry name" value="TagBP_ald_KbaY"/>
</dbReference>
<dbReference type="InterPro" id="IPR011288">
    <property type="entry name" value="TagBP_ald_KbaY/GatY"/>
</dbReference>
<dbReference type="NCBIfam" id="TIGR00167">
    <property type="entry name" value="cbbA"/>
    <property type="match status" value="1"/>
</dbReference>
<dbReference type="NCBIfam" id="NF006626">
    <property type="entry name" value="PRK09195.1"/>
    <property type="match status" value="1"/>
</dbReference>
<dbReference type="NCBIfam" id="NF009374">
    <property type="entry name" value="PRK12737.1"/>
    <property type="match status" value="1"/>
</dbReference>
<dbReference type="NCBIfam" id="NF009375">
    <property type="entry name" value="PRK12738.1"/>
    <property type="match status" value="1"/>
</dbReference>
<dbReference type="NCBIfam" id="TIGR01858">
    <property type="entry name" value="tag_bisphos_ald"/>
    <property type="match status" value="1"/>
</dbReference>
<dbReference type="PANTHER" id="PTHR30304">
    <property type="entry name" value="D-TAGATOSE-1,6-BISPHOSPHATE ALDOLASE"/>
    <property type="match status" value="1"/>
</dbReference>
<dbReference type="PANTHER" id="PTHR30304:SF0">
    <property type="entry name" value="D-TAGATOSE-1,6-BISPHOSPHATE ALDOLASE SUBUNIT GATY-RELATED"/>
    <property type="match status" value="1"/>
</dbReference>
<dbReference type="Pfam" id="PF01116">
    <property type="entry name" value="F_bP_aldolase"/>
    <property type="match status" value="1"/>
</dbReference>
<dbReference type="PIRSF" id="PIRSF001359">
    <property type="entry name" value="F_bP_aldolase_II"/>
    <property type="match status" value="1"/>
</dbReference>
<dbReference type="SUPFAM" id="SSF51569">
    <property type="entry name" value="Aldolase"/>
    <property type="match status" value="1"/>
</dbReference>
<dbReference type="PROSITE" id="PS00602">
    <property type="entry name" value="ALDOLASE_CLASS_II_1"/>
    <property type="match status" value="1"/>
</dbReference>
<dbReference type="PROSITE" id="PS00806">
    <property type="entry name" value="ALDOLASE_CLASS_II_2"/>
    <property type="match status" value="1"/>
</dbReference>
<accession>B7NKL0</accession>
<evidence type="ECO:0000255" key="1">
    <source>
        <dbReference type="HAMAP-Rule" id="MF_01293"/>
    </source>
</evidence>
<feature type="chain" id="PRO_1000140430" description="D-tagatose-1,6-bisphosphate aldolase subunit KbaY">
    <location>
        <begin position="1"/>
        <end position="286"/>
    </location>
</feature>
<feature type="active site" description="Proton donor" evidence="1">
    <location>
        <position position="82"/>
    </location>
</feature>
<feature type="binding site" evidence="1">
    <location>
        <position position="83"/>
    </location>
    <ligand>
        <name>Zn(2+)</name>
        <dbReference type="ChEBI" id="CHEBI:29105"/>
        <note>catalytic</note>
    </ligand>
</feature>
<feature type="binding site" evidence="1">
    <location>
        <position position="180"/>
    </location>
    <ligand>
        <name>Zn(2+)</name>
        <dbReference type="ChEBI" id="CHEBI:29105"/>
        <note>catalytic</note>
    </ligand>
</feature>
<feature type="binding site" evidence="1">
    <location>
        <position position="181"/>
    </location>
    <ligand>
        <name>dihydroxyacetone phosphate</name>
        <dbReference type="ChEBI" id="CHEBI:57642"/>
    </ligand>
</feature>
<feature type="binding site" evidence="1">
    <location>
        <position position="208"/>
    </location>
    <ligand>
        <name>Zn(2+)</name>
        <dbReference type="ChEBI" id="CHEBI:29105"/>
        <note>catalytic</note>
    </ligand>
</feature>
<feature type="binding site" evidence="1">
    <location>
        <begin position="209"/>
        <end position="211"/>
    </location>
    <ligand>
        <name>dihydroxyacetone phosphate</name>
        <dbReference type="ChEBI" id="CHEBI:57642"/>
    </ligand>
</feature>
<feature type="binding site" evidence="1">
    <location>
        <begin position="230"/>
        <end position="233"/>
    </location>
    <ligand>
        <name>dihydroxyacetone phosphate</name>
        <dbReference type="ChEBI" id="CHEBI:57642"/>
    </ligand>
</feature>
<gene>
    <name evidence="1" type="primary">kbaY</name>
    <name type="ordered locus">ECIAI39_3638</name>
</gene>
<keyword id="KW-0456">Lyase</keyword>
<keyword id="KW-0479">Metal-binding</keyword>
<keyword id="KW-0862">Zinc</keyword>
<name>KBAY_ECO7I</name>
<comment type="function">
    <text evidence="1">Catalytic subunit of the tagatose-1,6-bisphosphate aldolase KbaYZ, which catalyzes the reversible aldol condensation of dihydroxyacetone phosphate (DHAP or glycerone-phosphate) with glyceraldehyde 3-phosphate (G3P) to produce tagatose 1,6-bisphosphate (TBP). Requires KbaZ subunit for full activity and stability.</text>
</comment>
<comment type="catalytic activity">
    <reaction evidence="1">
        <text>D-tagatofuranose 1,6-bisphosphate = D-glyceraldehyde 3-phosphate + dihydroxyacetone phosphate</text>
        <dbReference type="Rhea" id="RHEA:22948"/>
        <dbReference type="ChEBI" id="CHEBI:57642"/>
        <dbReference type="ChEBI" id="CHEBI:58694"/>
        <dbReference type="ChEBI" id="CHEBI:59776"/>
        <dbReference type="EC" id="4.1.2.40"/>
    </reaction>
</comment>
<comment type="cofactor">
    <cofactor evidence="1">
        <name>Zn(2+)</name>
        <dbReference type="ChEBI" id="CHEBI:29105"/>
    </cofactor>
    <text evidence="1">Binds 1 zinc ion per subunit.</text>
</comment>
<comment type="pathway">
    <text evidence="1">Carbohydrate metabolism; D-tagatose 6-phosphate degradation; D-glyceraldehyde 3-phosphate and glycerone phosphate from D-tagatose 6-phosphate: step 2/2.</text>
</comment>
<comment type="subunit">
    <text evidence="1">Homotetramer. Forms a complex with KbaZ.</text>
</comment>
<comment type="similarity">
    <text evidence="1">Belongs to the class II fructose-bisphosphate aldolase family. TagBP aldolase KbaY subfamily.</text>
</comment>
<proteinExistence type="inferred from homology"/>
<protein>
    <recommendedName>
        <fullName evidence="1">D-tagatose-1,6-bisphosphate aldolase subunit KbaY</fullName>
        <shortName evidence="1">TBPA</shortName>
        <shortName evidence="1">TagBP aldolase</shortName>
        <ecNumber evidence="1">4.1.2.40</ecNumber>
    </recommendedName>
    <alternativeName>
        <fullName evidence="1">D-tagatose-bisphosphate aldolase class II</fullName>
    </alternativeName>
    <alternativeName>
        <fullName evidence="1">Ketose 1,6-bisphosphate aldolase class II</fullName>
    </alternativeName>
    <alternativeName>
        <fullName evidence="1">Tagatose-bisphosphate aldolase</fullName>
    </alternativeName>
</protein>
<reference key="1">
    <citation type="journal article" date="2009" name="PLoS Genet.">
        <title>Organised genome dynamics in the Escherichia coli species results in highly diverse adaptive paths.</title>
        <authorList>
            <person name="Touchon M."/>
            <person name="Hoede C."/>
            <person name="Tenaillon O."/>
            <person name="Barbe V."/>
            <person name="Baeriswyl S."/>
            <person name="Bidet P."/>
            <person name="Bingen E."/>
            <person name="Bonacorsi S."/>
            <person name="Bouchier C."/>
            <person name="Bouvet O."/>
            <person name="Calteau A."/>
            <person name="Chiapello H."/>
            <person name="Clermont O."/>
            <person name="Cruveiller S."/>
            <person name="Danchin A."/>
            <person name="Diard M."/>
            <person name="Dossat C."/>
            <person name="Karoui M.E."/>
            <person name="Frapy E."/>
            <person name="Garry L."/>
            <person name="Ghigo J.M."/>
            <person name="Gilles A.M."/>
            <person name="Johnson J."/>
            <person name="Le Bouguenec C."/>
            <person name="Lescat M."/>
            <person name="Mangenot S."/>
            <person name="Martinez-Jehanne V."/>
            <person name="Matic I."/>
            <person name="Nassif X."/>
            <person name="Oztas S."/>
            <person name="Petit M.A."/>
            <person name="Pichon C."/>
            <person name="Rouy Z."/>
            <person name="Ruf C.S."/>
            <person name="Schneider D."/>
            <person name="Tourret J."/>
            <person name="Vacherie B."/>
            <person name="Vallenet D."/>
            <person name="Medigue C."/>
            <person name="Rocha E.P.C."/>
            <person name="Denamur E."/>
        </authorList>
    </citation>
    <scope>NUCLEOTIDE SEQUENCE [LARGE SCALE GENOMIC DNA]</scope>
    <source>
        <strain>IAI39 / ExPEC</strain>
    </source>
</reference>
<sequence length="286" mass="31295">MSIISTKYLLQDAQANGYAVPAFNIHNAETIQAILEVCSEMRSPVILAGTPGTFKHIALEEIYALCSAYSTTYNMPLALHLDHHESLDDIRRKVHAGVRSAMIDGSHFPFDENVKLVKSVVDFCHSQDCSVEAELGRLGGVEDDMSVDAESAFLTDPQEAKRFVELTGVDSLAVAIGTAHGLYSKTPKIDFQRLAEIREVVDVPLVLHGASDVPDEFVRRTIELGVTKVNVATELKIAFAGAVKAWFAENPQGNDPRYYMRVGMDAMKEVVRNKINVCGSANLISA</sequence>
<organism>
    <name type="scientific">Escherichia coli O7:K1 (strain IAI39 / ExPEC)</name>
    <dbReference type="NCBI Taxonomy" id="585057"/>
    <lineage>
        <taxon>Bacteria</taxon>
        <taxon>Pseudomonadati</taxon>
        <taxon>Pseudomonadota</taxon>
        <taxon>Gammaproteobacteria</taxon>
        <taxon>Enterobacterales</taxon>
        <taxon>Enterobacteriaceae</taxon>
        <taxon>Escherichia</taxon>
    </lineage>
</organism>